<comment type="function">
    <text evidence="1">Component of the cytochrome c oxidase, the last enzyme in the mitochondrial electron transport chain which drives oxidative phosphorylation. The respiratory chain contains 3 multisubunit complexes succinate dehydrogenase (complex II, CII), ubiquinol-cytochrome c oxidoreductase (cytochrome b-c1 complex, complex III, CIII) and cytochrome c oxidase (complex IV, CIV), that cooperate to transfer electrons derived from NADH and succinate to molecular oxygen, creating an electrochemical gradient over the inner membrane that drives transmembrane transport and the ATP synthase. Cytochrome c oxidase is the component of the respiratory chain that catalyzes the reduction of oxygen to water. Electrons originating from reduced cytochrome c in the intermembrane space (IMS) are transferred via the dinuclear copper A center (CU(A)) of Cox2 and heme A of Cox1 to the active site in Cox1, a binuclear center (BNC) formed by heme A3 and copper B (CU(B)). The BNC reduces molecular oxygen to 2 water molecules using 4 electrons from cytochrome c in the IMS and 4 protons from the mitochondrial matrix.</text>
</comment>
<comment type="pathway">
    <text evidence="1">Energy metabolism; oxidative phosphorylation.</text>
</comment>
<comment type="subunit">
    <text evidence="3 4">Component of the cytochrome c oxidase (complex IV, CIV), a multisubunit enzyme composed of 11 subunits. The complex is composed of a catalytic core of 3 subunits Cox1, Cox2 and Cox3, encoded in the mitochondrial DNA, and 8 supernumerary subunits Cox4, Cox5a/Cox5, Cox6, Cox7, Cox8, Cox7a/Cox9, Cox6b/Cox12 and Cox6a/Cox13, which are encoded in the nuclear genome (PubMed:31316820). The complex exists as a monomer or a dimer and forms respiratory supercomplexes (SCs) in the inner mitochondrial membrane with NADH-ubiquinone oxidoreductase (complex I, CI) and ubiquinol-cytochrome c oxidoreductase (cytochrome b-c1 complex, complex III, CIII), resulting in various different assemblies (supercomplexes I(1)IV(1), I(1)III(3)IV(2), III(2)IV(1) and III(2)IV(2) as well as larger supercomplexes of compositions like I(1)III(2)IV(5-6)) (PubMed:17873079).</text>
</comment>
<comment type="subcellular location">
    <subcellularLocation>
        <location evidence="4">Mitochondrion inner membrane</location>
        <topology evidence="4">Single-pass membrane protein</topology>
    </subcellularLocation>
</comment>
<comment type="similarity">
    <text evidence="6">Belongs to the cytochrome c oxidase VIIc family.</text>
</comment>
<dbReference type="EMBL" id="CM002237">
    <property type="protein sequence ID" value="EAA27213.1"/>
    <property type="molecule type" value="Genomic_DNA"/>
</dbReference>
<dbReference type="RefSeq" id="XP_956449.1">
    <property type="nucleotide sequence ID" value="XM_951356.3"/>
</dbReference>
<dbReference type="STRING" id="367110.Q1K528"/>
<dbReference type="PaxDb" id="5141-EFNCRP00000002632"/>
<dbReference type="EnsemblFungi" id="EAA27213">
    <property type="protein sequence ID" value="EAA27213"/>
    <property type="gene ID" value="NCU03340"/>
</dbReference>
<dbReference type="GeneID" id="3872614"/>
<dbReference type="KEGG" id="ncr:NCU03340"/>
<dbReference type="VEuPathDB" id="FungiDB:NCU03340"/>
<dbReference type="HOGENOM" id="CLU_147541_0_2_1"/>
<dbReference type="InParanoid" id="Q1K528"/>
<dbReference type="OMA" id="RSKWFGA"/>
<dbReference type="OrthoDB" id="9974841at2759"/>
<dbReference type="UniPathway" id="UPA00705"/>
<dbReference type="Proteomes" id="UP000001805">
    <property type="component" value="Chromosome 6, Linkage Group II"/>
</dbReference>
<dbReference type="GO" id="GO:0005743">
    <property type="term" value="C:mitochondrial inner membrane"/>
    <property type="evidence" value="ECO:0007669"/>
    <property type="project" value="UniProtKB-SubCell"/>
</dbReference>
<dbReference type="GO" id="GO:0045277">
    <property type="term" value="C:respiratory chain complex IV"/>
    <property type="evidence" value="ECO:0007669"/>
    <property type="project" value="InterPro"/>
</dbReference>
<dbReference type="GO" id="GO:0006123">
    <property type="term" value="P:mitochondrial electron transport, cytochrome c to oxygen"/>
    <property type="evidence" value="ECO:0000318"/>
    <property type="project" value="GO_Central"/>
</dbReference>
<dbReference type="FunFam" id="4.10.49.10:FF:000001">
    <property type="entry name" value="Cytochrome c oxidase subunit 7C"/>
    <property type="match status" value="1"/>
</dbReference>
<dbReference type="Gene3D" id="4.10.49.10">
    <property type="entry name" value="Cytochrome c oxidase subunit VIIc"/>
    <property type="match status" value="1"/>
</dbReference>
<dbReference type="InterPro" id="IPR004202">
    <property type="entry name" value="COX7C/Cox8"/>
</dbReference>
<dbReference type="InterPro" id="IPR036636">
    <property type="entry name" value="COX7C/Cox8_sf"/>
</dbReference>
<dbReference type="PANTHER" id="PTHR13313:SF0">
    <property type="entry name" value="CYTOCHROME C OXIDASE SUBUNIT 7C, MITOCHONDRIAL"/>
    <property type="match status" value="1"/>
</dbReference>
<dbReference type="PANTHER" id="PTHR13313">
    <property type="entry name" value="CYTOCHROME C OXIDASE SUBUNIT VIIC"/>
    <property type="match status" value="1"/>
</dbReference>
<dbReference type="Pfam" id="PF02935">
    <property type="entry name" value="COX7C"/>
    <property type="match status" value="1"/>
</dbReference>
<dbReference type="SUPFAM" id="SSF81427">
    <property type="entry name" value="Mitochondrial cytochrome c oxidase subunit VIIc (aka VIIIa)"/>
    <property type="match status" value="1"/>
</dbReference>
<protein>
    <recommendedName>
        <fullName>Cytochrome c oxidase subunit 8, mitochondrial</fullName>
    </recommendedName>
    <alternativeName>
        <fullName>Cytochrome c oxidase polypeptide VIIc</fullName>
    </alternativeName>
    <alternativeName>
        <fullName evidence="5">Cytochrome c oxidase subunit Cox8</fullName>
    </alternativeName>
</protein>
<reference key="1">
    <citation type="journal article" date="2003" name="Nature">
        <title>The genome sequence of the filamentous fungus Neurospora crassa.</title>
        <authorList>
            <person name="Galagan J.E."/>
            <person name="Calvo S.E."/>
            <person name="Borkovich K.A."/>
            <person name="Selker E.U."/>
            <person name="Read N.D."/>
            <person name="Jaffe D.B."/>
            <person name="FitzHugh W."/>
            <person name="Ma L.-J."/>
            <person name="Smirnov S."/>
            <person name="Purcell S."/>
            <person name="Rehman B."/>
            <person name="Elkins T."/>
            <person name="Engels R."/>
            <person name="Wang S."/>
            <person name="Nielsen C.B."/>
            <person name="Butler J."/>
            <person name="Endrizzi M."/>
            <person name="Qui D."/>
            <person name="Ianakiev P."/>
            <person name="Bell-Pedersen D."/>
            <person name="Nelson M.A."/>
            <person name="Werner-Washburne M."/>
            <person name="Selitrennikoff C.P."/>
            <person name="Kinsey J.A."/>
            <person name="Braun E.L."/>
            <person name="Zelter A."/>
            <person name="Schulte U."/>
            <person name="Kothe G.O."/>
            <person name="Jedd G."/>
            <person name="Mewes H.-W."/>
            <person name="Staben C."/>
            <person name="Marcotte E."/>
            <person name="Greenberg D."/>
            <person name="Roy A."/>
            <person name="Foley K."/>
            <person name="Naylor J."/>
            <person name="Stange-Thomann N."/>
            <person name="Barrett R."/>
            <person name="Gnerre S."/>
            <person name="Kamal M."/>
            <person name="Kamvysselis M."/>
            <person name="Mauceli E.W."/>
            <person name="Bielke C."/>
            <person name="Rudd S."/>
            <person name="Frishman D."/>
            <person name="Krystofova S."/>
            <person name="Rasmussen C."/>
            <person name="Metzenberg R.L."/>
            <person name="Perkins D.D."/>
            <person name="Kroken S."/>
            <person name="Cogoni C."/>
            <person name="Macino G."/>
            <person name="Catcheside D.E.A."/>
            <person name="Li W."/>
            <person name="Pratt R.J."/>
            <person name="Osmani S.A."/>
            <person name="DeSouza C.P.C."/>
            <person name="Glass N.L."/>
            <person name="Orbach M.J."/>
            <person name="Berglund J.A."/>
            <person name="Voelker R."/>
            <person name="Yarden O."/>
            <person name="Plamann M."/>
            <person name="Seiler S."/>
            <person name="Dunlap J.C."/>
            <person name="Radford A."/>
            <person name="Aramayo R."/>
            <person name="Natvig D.O."/>
            <person name="Alex L.A."/>
            <person name="Mannhaupt G."/>
            <person name="Ebbole D.J."/>
            <person name="Freitag M."/>
            <person name="Paulsen I."/>
            <person name="Sachs M.S."/>
            <person name="Lander E.S."/>
            <person name="Nusbaum C."/>
            <person name="Birren B.W."/>
        </authorList>
    </citation>
    <scope>NUCLEOTIDE SEQUENCE [LARGE SCALE GENOMIC DNA]</scope>
    <source>
        <strain>ATCC 24698 / 74-OR23-1A / CBS 708.71 / DSM 1257 / FGSC 987</strain>
    </source>
</reference>
<reference key="2">
    <citation type="journal article" date="2007" name="Eukaryot. Cell">
        <title>Supramolecular organization of the respiratory chain in Neurospora crassa mitochondria.</title>
        <authorList>
            <person name="Marques I."/>
            <person name="Dencher N.A."/>
            <person name="Videira A."/>
            <person name="Krause F."/>
        </authorList>
    </citation>
    <scope>COMPOSITION OF THE CYTOCHROME C OXIDASE COMPLEX</scope>
</reference>
<reference key="3">
    <citation type="journal article" date="2019" name="IUCrJ">
        <title>Cryo-EM structure of Neurospora crassa respiratory complex IV.</title>
        <authorList>
            <person name="Bausewein T."/>
            <person name="Nussberger S."/>
            <person name="Kuehlbrandt W."/>
        </authorList>
    </citation>
    <scope>STRUCTURE BY ELECTRON MICROSCOPY (5.5 ANGSTROMS)</scope>
    <scope>SUBUNIT</scope>
</reference>
<accession>Q1K528</accession>
<keyword id="KW-0472">Membrane</keyword>
<keyword id="KW-0496">Mitochondrion</keyword>
<keyword id="KW-0999">Mitochondrion inner membrane</keyword>
<keyword id="KW-1185">Reference proteome</keyword>
<keyword id="KW-0809">Transit peptide</keyword>
<keyword id="KW-0812">Transmembrane</keyword>
<keyword id="KW-1133">Transmembrane helix</keyword>
<evidence type="ECO:0000250" key="1">
    <source>
        <dbReference type="UniProtKB" id="P04039"/>
    </source>
</evidence>
<evidence type="ECO:0000255" key="2"/>
<evidence type="ECO:0000269" key="3">
    <source>
    </source>
</evidence>
<evidence type="ECO:0000269" key="4">
    <source>
    </source>
</evidence>
<evidence type="ECO:0000303" key="5">
    <source>
    </source>
</evidence>
<evidence type="ECO:0000305" key="6"/>
<gene>
    <name type="primary">cox-15</name>
    <name type="ORF">NCU03340</name>
</gene>
<proteinExistence type="evidence at protein level"/>
<feature type="transit peptide" description="Mitochondrion" evidence="2">
    <location>
        <begin position="1"/>
        <end position="31"/>
    </location>
</feature>
<feature type="chain" id="PRO_0000448901" description="Cytochrome c oxidase subunit 8, mitochondrial">
    <location>
        <begin position="32"/>
        <end position="82"/>
    </location>
</feature>
<feature type="topological domain" description="Mitochondrial matrix" evidence="4">
    <location>
        <begin position="32"/>
        <end position="52"/>
    </location>
</feature>
<feature type="transmembrane region" description="Helical" evidence="4">
    <location>
        <begin position="53"/>
        <end position="75"/>
    </location>
</feature>
<feature type="topological domain" description="Mitochondrial intermembrane" evidence="4">
    <location>
        <begin position="76"/>
        <end position="82"/>
    </location>
</feature>
<name>COX8_NEUCR</name>
<organism>
    <name type="scientific">Neurospora crassa (strain ATCC 24698 / 74-OR23-1A / CBS 708.71 / DSM 1257 / FGSC 987)</name>
    <dbReference type="NCBI Taxonomy" id="367110"/>
    <lineage>
        <taxon>Eukaryota</taxon>
        <taxon>Fungi</taxon>
        <taxon>Dikarya</taxon>
        <taxon>Ascomycota</taxon>
        <taxon>Pezizomycotina</taxon>
        <taxon>Sordariomycetes</taxon>
        <taxon>Sordariomycetidae</taxon>
        <taxon>Sordariales</taxon>
        <taxon>Sordariaceae</taxon>
        <taxon>Neurospora</taxon>
    </lineage>
</organism>
<sequence length="82" mass="9662">MFSRVALRAAPRQQPFSLVARRTFQTTRAQLSSPYHYPEGPRSNLPFNPKTRFFWFRYLMYCVVGFGSPVAIAVWQTYRPRS</sequence>